<evidence type="ECO:0000250" key="1">
    <source>
        <dbReference type="UniProtKB" id="A7MB62"/>
    </source>
</evidence>
<evidence type="ECO:0000250" key="2">
    <source>
        <dbReference type="UniProtKB" id="P61160"/>
    </source>
</evidence>
<evidence type="ECO:0000305" key="3"/>
<organism>
    <name type="scientific">Rattus norvegicus</name>
    <name type="common">Rat</name>
    <dbReference type="NCBI Taxonomy" id="10116"/>
    <lineage>
        <taxon>Eukaryota</taxon>
        <taxon>Metazoa</taxon>
        <taxon>Chordata</taxon>
        <taxon>Craniata</taxon>
        <taxon>Vertebrata</taxon>
        <taxon>Euteleostomi</taxon>
        <taxon>Mammalia</taxon>
        <taxon>Eutheria</taxon>
        <taxon>Euarchontoglires</taxon>
        <taxon>Glires</taxon>
        <taxon>Rodentia</taxon>
        <taxon>Myomorpha</taxon>
        <taxon>Muroidea</taxon>
        <taxon>Muridae</taxon>
        <taxon>Murinae</taxon>
        <taxon>Rattus</taxon>
    </lineage>
</organism>
<keyword id="KW-0007">Acetylation</keyword>
<keyword id="KW-0009">Actin-binding</keyword>
<keyword id="KW-0067">ATP-binding</keyword>
<keyword id="KW-0966">Cell projection</keyword>
<keyword id="KW-0963">Cytoplasm</keyword>
<keyword id="KW-0206">Cytoskeleton</keyword>
<keyword id="KW-0547">Nucleotide-binding</keyword>
<keyword id="KW-0539">Nucleus</keyword>
<keyword id="KW-1185">Reference proteome</keyword>
<accession>Q5M7U6</accession>
<protein>
    <recommendedName>
        <fullName>Actin-related protein 2</fullName>
    </recommendedName>
    <alternativeName>
        <fullName>Actin-like protein 2</fullName>
    </alternativeName>
</protein>
<sequence>MDSQGRKVVVCDNGTGFVKCGYAGSNFPEHIFPALVGRPIIRSTTKVGNIEIKDLMVGDEASELRSMLEVNYPMENGIVRNWDDMKHLWDYTFGPEKLNIDTRSCKILLTEPPMNPTKNREKIVEVMFETYQFSGVYVAIQAVLTLYAQGLLTGVVVDSGDGVTHICPVYEGFSLPHLTRRLDIAGRDITRYLIKLLLLRGYAFNHSADFETVRMIKEKLCYVGYNIEQEQKLALETTVLVESYTLPDGRIIKVGGERFEAPEALFQPHLINVEGVGVAELLFNTIQAADIDTRSEFYKHIVLSGGSTMYPGLPSRLERELKQLYLERVLKGDVEKLSKFKIRIEDPPRRKHMVFLGGAVLADIMKDKDNFWMTRQEYQEKGVRVLEKLGVTVR</sequence>
<feature type="chain" id="PRO_0000089070" description="Actin-related protein 2">
    <location>
        <begin position="1"/>
        <end position="394"/>
    </location>
</feature>
<feature type="binding site" evidence="1">
    <location>
        <begin position="160"/>
        <end position="162"/>
    </location>
    <ligand>
        <name>ATP</name>
        <dbReference type="ChEBI" id="CHEBI:30616"/>
    </ligand>
</feature>
<feature type="binding site" evidence="1">
    <location>
        <begin position="214"/>
        <end position="218"/>
    </location>
    <ligand>
        <name>ATP</name>
        <dbReference type="ChEBI" id="CHEBI:30616"/>
    </ligand>
</feature>
<feature type="binding site" evidence="1">
    <location>
        <begin position="305"/>
        <end position="310"/>
    </location>
    <ligand>
        <name>ATP</name>
        <dbReference type="ChEBI" id="CHEBI:30616"/>
    </ligand>
</feature>
<feature type="modified residue" description="N-acetylmethionine" evidence="2">
    <location>
        <position position="1"/>
    </location>
</feature>
<feature type="modified residue" description="N6-acetyllysine" evidence="2">
    <location>
        <position position="299"/>
    </location>
</feature>
<feature type="modified residue" description="N6-acetyllysine" evidence="2">
    <location>
        <position position="322"/>
    </location>
</feature>
<comment type="function">
    <text evidence="2">ATP-binding component of the Arp2/3 complex, a multiprotein complex that mediates actin polymerization upon stimulation by nucleation-promoting factor (NPF). The Arp2/3 complex mediates the formation of branched actin networks in the cytoplasm, providing the force for cell motility. Seems to contact the pointed end of the daughter actin filament. In addition to its role in the cytoplasmic cytoskeleton, the Arp2/3 complex also promotes actin polymerization in the nucleus, thereby regulating gene transcription and repair of damaged DNA. The Arp2/3 complex promotes homologous recombination (HR) repair in response to DNA damage by promoting nuclear actin polymerization, leading to drive motility of double-strand breaks (DSBs).</text>
</comment>
<comment type="subunit">
    <text evidence="2">Component of the Arp2/3 complex composed of ACTR2/ARP2, ACTR3/ARP3, ARPC1B/p41-ARC, ARPC2/p34-ARC, ARPC3/p21-ARC, ARPC4/p20-ARC and ARPC5/p16-ARC.</text>
</comment>
<comment type="subcellular location">
    <subcellularLocation>
        <location evidence="2">Cytoplasm</location>
        <location evidence="2">Cytoskeleton</location>
    </subcellularLocation>
    <subcellularLocation>
        <location evidence="2">Cell projection</location>
    </subcellularLocation>
    <subcellularLocation>
        <location evidence="2">Nucleus</location>
    </subcellularLocation>
</comment>
<comment type="similarity">
    <text evidence="3">Belongs to the actin family. ARP2 subfamily.</text>
</comment>
<dbReference type="EMBL" id="BC088442">
    <property type="protein sequence ID" value="AAH88442.1"/>
    <property type="molecule type" value="mRNA"/>
</dbReference>
<dbReference type="RefSeq" id="NP_001009268.1">
    <property type="nucleotide sequence ID" value="NM_001009268.1"/>
</dbReference>
<dbReference type="SMR" id="Q5M7U6"/>
<dbReference type="BioGRID" id="253032">
    <property type="interactions" value="4"/>
</dbReference>
<dbReference type="FunCoup" id="Q5M7U6">
    <property type="interactions" value="4045"/>
</dbReference>
<dbReference type="IntAct" id="Q5M7U6">
    <property type="interactions" value="3"/>
</dbReference>
<dbReference type="MINT" id="Q5M7U6"/>
<dbReference type="STRING" id="10116.ENSRNOP00000006607"/>
<dbReference type="iPTMnet" id="Q5M7U6"/>
<dbReference type="PhosphoSitePlus" id="Q5M7U6"/>
<dbReference type="jPOST" id="Q5M7U6"/>
<dbReference type="PaxDb" id="10116-ENSRNOP00000006607"/>
<dbReference type="GeneID" id="289820"/>
<dbReference type="KEGG" id="rno:289820"/>
<dbReference type="UCSC" id="RGD:1310826">
    <property type="organism name" value="rat"/>
</dbReference>
<dbReference type="AGR" id="RGD:1310826"/>
<dbReference type="CTD" id="10097"/>
<dbReference type="RGD" id="1310826">
    <property type="gene designation" value="Actr2"/>
</dbReference>
<dbReference type="VEuPathDB" id="HostDB:ENSRNOG00000004959"/>
<dbReference type="eggNOG" id="KOG0677">
    <property type="taxonomic scope" value="Eukaryota"/>
</dbReference>
<dbReference type="HOGENOM" id="CLU_027965_0_0_1"/>
<dbReference type="InParanoid" id="Q5M7U6"/>
<dbReference type="OrthoDB" id="10251209at2759"/>
<dbReference type="PhylomeDB" id="Q5M7U6"/>
<dbReference type="TreeFam" id="TF300467"/>
<dbReference type="Reactome" id="R-RNO-2029482">
    <property type="pathway name" value="Regulation of actin dynamics for phagocytic cup formation"/>
</dbReference>
<dbReference type="Reactome" id="R-RNO-3928662">
    <property type="pathway name" value="EPHB-mediated forward signaling"/>
</dbReference>
<dbReference type="Reactome" id="R-RNO-5663213">
    <property type="pathway name" value="RHO GTPases Activate WASPs and WAVEs"/>
</dbReference>
<dbReference type="Reactome" id="R-RNO-6798695">
    <property type="pathway name" value="Neutrophil degranulation"/>
</dbReference>
<dbReference type="Reactome" id="R-RNO-8856828">
    <property type="pathway name" value="Clathrin-mediated endocytosis"/>
</dbReference>
<dbReference type="PRO" id="PR:Q5M7U6"/>
<dbReference type="Proteomes" id="UP000002494">
    <property type="component" value="Chromosome 14"/>
</dbReference>
<dbReference type="Bgee" id="ENSRNOG00000004959">
    <property type="expression patterns" value="Expressed in spleen and 19 other cell types or tissues"/>
</dbReference>
<dbReference type="GO" id="GO:0030478">
    <property type="term" value="C:actin cap"/>
    <property type="evidence" value="ECO:0000266"/>
    <property type="project" value="RGD"/>
</dbReference>
<dbReference type="GO" id="GO:0005885">
    <property type="term" value="C:Arp2/3 protein complex"/>
    <property type="evidence" value="ECO:0000250"/>
    <property type="project" value="UniProtKB"/>
</dbReference>
<dbReference type="GO" id="GO:0005938">
    <property type="term" value="C:cell cortex"/>
    <property type="evidence" value="ECO:0000266"/>
    <property type="project" value="RGD"/>
</dbReference>
<dbReference type="GO" id="GO:0005737">
    <property type="term" value="C:cytoplasm"/>
    <property type="evidence" value="ECO:0000250"/>
    <property type="project" value="UniProtKB"/>
</dbReference>
<dbReference type="GO" id="GO:0005829">
    <property type="term" value="C:cytosol"/>
    <property type="evidence" value="ECO:0007669"/>
    <property type="project" value="GOC"/>
</dbReference>
<dbReference type="GO" id="GO:0030027">
    <property type="term" value="C:lamellipodium"/>
    <property type="evidence" value="ECO:0000314"/>
    <property type="project" value="RGD"/>
</dbReference>
<dbReference type="GO" id="GO:0005634">
    <property type="term" value="C:nucleus"/>
    <property type="evidence" value="ECO:0000250"/>
    <property type="project" value="UniProtKB"/>
</dbReference>
<dbReference type="GO" id="GO:0061825">
    <property type="term" value="C:podosome core"/>
    <property type="evidence" value="ECO:0000314"/>
    <property type="project" value="RGD"/>
</dbReference>
<dbReference type="GO" id="GO:0098794">
    <property type="term" value="C:postsynapse"/>
    <property type="evidence" value="ECO:0000314"/>
    <property type="project" value="SynGO"/>
</dbReference>
<dbReference type="GO" id="GO:0035861">
    <property type="term" value="C:site of double-strand break"/>
    <property type="evidence" value="ECO:0000250"/>
    <property type="project" value="UniProtKB"/>
</dbReference>
<dbReference type="GO" id="GO:0003779">
    <property type="term" value="F:actin binding"/>
    <property type="evidence" value="ECO:0007669"/>
    <property type="project" value="UniProtKB-KW"/>
</dbReference>
<dbReference type="GO" id="GO:0005524">
    <property type="term" value="F:ATP binding"/>
    <property type="evidence" value="ECO:0007669"/>
    <property type="project" value="UniProtKB-KW"/>
</dbReference>
<dbReference type="GO" id="GO:0008092">
    <property type="term" value="F:cytoskeletal protein binding"/>
    <property type="evidence" value="ECO:0000314"/>
    <property type="project" value="RGD"/>
</dbReference>
<dbReference type="GO" id="GO:0005200">
    <property type="term" value="F:structural constituent of cytoskeleton"/>
    <property type="evidence" value="ECO:0000266"/>
    <property type="project" value="RGD"/>
</dbReference>
<dbReference type="GO" id="GO:0030036">
    <property type="term" value="P:actin cytoskeleton organization"/>
    <property type="evidence" value="ECO:0000266"/>
    <property type="project" value="RGD"/>
</dbReference>
<dbReference type="GO" id="GO:0034314">
    <property type="term" value="P:Arp2/3 complex-mediated actin nucleation"/>
    <property type="evidence" value="ECO:0000250"/>
    <property type="project" value="UniProtKB"/>
</dbReference>
<dbReference type="GO" id="GO:0008306">
    <property type="term" value="P:associative learning"/>
    <property type="evidence" value="ECO:0000270"/>
    <property type="project" value="RGD"/>
</dbReference>
<dbReference type="GO" id="GO:0008356">
    <property type="term" value="P:asymmetric cell division"/>
    <property type="evidence" value="ECO:0000266"/>
    <property type="project" value="RGD"/>
</dbReference>
<dbReference type="GO" id="GO:0035984">
    <property type="term" value="P:cellular response to trichostatin A"/>
    <property type="evidence" value="ECO:0000270"/>
    <property type="project" value="RGD"/>
</dbReference>
<dbReference type="GO" id="GO:0071346">
    <property type="term" value="P:cellular response to type II interferon"/>
    <property type="evidence" value="ECO:0000266"/>
    <property type="project" value="RGD"/>
</dbReference>
<dbReference type="GO" id="GO:0060271">
    <property type="term" value="P:cilium assembly"/>
    <property type="evidence" value="ECO:0000266"/>
    <property type="project" value="RGD"/>
</dbReference>
<dbReference type="GO" id="GO:0016482">
    <property type="term" value="P:cytosolic transport"/>
    <property type="evidence" value="ECO:0000266"/>
    <property type="project" value="RGD"/>
</dbReference>
<dbReference type="GO" id="GO:0007163">
    <property type="term" value="P:establishment or maintenance of cell polarity"/>
    <property type="evidence" value="ECO:0000266"/>
    <property type="project" value="RGD"/>
</dbReference>
<dbReference type="GO" id="GO:0051321">
    <property type="term" value="P:meiotic cell cycle"/>
    <property type="evidence" value="ECO:0000266"/>
    <property type="project" value="RGD"/>
</dbReference>
<dbReference type="GO" id="GO:0016344">
    <property type="term" value="P:meiotic chromosome movement towards spindle pole"/>
    <property type="evidence" value="ECO:0000266"/>
    <property type="project" value="RGD"/>
</dbReference>
<dbReference type="GO" id="GO:0033206">
    <property type="term" value="P:meiotic cytokinesis"/>
    <property type="evidence" value="ECO:0000266"/>
    <property type="project" value="RGD"/>
</dbReference>
<dbReference type="GO" id="GO:0061003">
    <property type="term" value="P:positive regulation of dendritic spine morphogenesis"/>
    <property type="evidence" value="ECO:0000315"/>
    <property type="project" value="RGD"/>
</dbReference>
<dbReference type="GO" id="GO:1905168">
    <property type="term" value="P:positive regulation of double-strand break repair via homologous recombination"/>
    <property type="evidence" value="ECO:0000250"/>
    <property type="project" value="UniProtKB"/>
</dbReference>
<dbReference type="GO" id="GO:0010592">
    <property type="term" value="P:positive regulation of lamellipodium assembly"/>
    <property type="evidence" value="ECO:0000266"/>
    <property type="project" value="RGD"/>
</dbReference>
<dbReference type="GO" id="GO:0045944">
    <property type="term" value="P:positive regulation of transcription by RNA polymerase II"/>
    <property type="evidence" value="ECO:0000250"/>
    <property type="project" value="UniProtKB"/>
</dbReference>
<dbReference type="GO" id="GO:0045471">
    <property type="term" value="P:response to ethanol"/>
    <property type="evidence" value="ECO:0000270"/>
    <property type="project" value="RGD"/>
</dbReference>
<dbReference type="GO" id="GO:0035902">
    <property type="term" value="P:response to immobilization stress"/>
    <property type="evidence" value="ECO:0000270"/>
    <property type="project" value="RGD"/>
</dbReference>
<dbReference type="GO" id="GO:0051653">
    <property type="term" value="P:spindle localization"/>
    <property type="evidence" value="ECO:0000266"/>
    <property type="project" value="RGD"/>
</dbReference>
<dbReference type="CDD" id="cd10220">
    <property type="entry name" value="ASKHA_NBD_Arp2"/>
    <property type="match status" value="1"/>
</dbReference>
<dbReference type="FunFam" id="3.30.420.40:FF:000538">
    <property type="entry name" value="Actin-related protein 2"/>
    <property type="match status" value="1"/>
</dbReference>
<dbReference type="FunFam" id="3.90.640.10:FF:000005">
    <property type="entry name" value="Actin-related protein 2"/>
    <property type="match status" value="1"/>
</dbReference>
<dbReference type="Gene3D" id="3.30.420.40">
    <property type="match status" value="2"/>
</dbReference>
<dbReference type="Gene3D" id="3.90.640.10">
    <property type="entry name" value="Actin, Chain A, domain 4"/>
    <property type="match status" value="1"/>
</dbReference>
<dbReference type="InterPro" id="IPR004000">
    <property type="entry name" value="Actin"/>
</dbReference>
<dbReference type="InterPro" id="IPR020902">
    <property type="entry name" value="Actin/actin-like_CS"/>
</dbReference>
<dbReference type="InterPro" id="IPR043129">
    <property type="entry name" value="ATPase_NBD"/>
</dbReference>
<dbReference type="PANTHER" id="PTHR11937">
    <property type="entry name" value="ACTIN"/>
    <property type="match status" value="1"/>
</dbReference>
<dbReference type="Pfam" id="PF00022">
    <property type="entry name" value="Actin"/>
    <property type="match status" value="1"/>
</dbReference>
<dbReference type="PRINTS" id="PR00190">
    <property type="entry name" value="ACTIN"/>
</dbReference>
<dbReference type="SMART" id="SM00268">
    <property type="entry name" value="ACTIN"/>
    <property type="match status" value="1"/>
</dbReference>
<dbReference type="SUPFAM" id="SSF53067">
    <property type="entry name" value="Actin-like ATPase domain"/>
    <property type="match status" value="2"/>
</dbReference>
<dbReference type="PROSITE" id="PS01132">
    <property type="entry name" value="ACTINS_ACT_LIKE"/>
    <property type="match status" value="1"/>
</dbReference>
<reference key="1">
    <citation type="journal article" date="2004" name="Genome Res.">
        <title>The status, quality, and expansion of the NIH full-length cDNA project: the Mammalian Gene Collection (MGC).</title>
        <authorList>
            <consortium name="The MGC Project Team"/>
        </authorList>
    </citation>
    <scope>NUCLEOTIDE SEQUENCE [LARGE SCALE MRNA]</scope>
    <source>
        <tissue>Kidney</tissue>
    </source>
</reference>
<gene>
    <name type="primary">Actr2</name>
    <name type="synonym">Arp2</name>
</gene>
<name>ARP2_RAT</name>
<proteinExistence type="evidence at transcript level"/>